<dbReference type="EMBL" id="AL009126">
    <property type="protein sequence ID" value="CAB15233.1"/>
    <property type="molecule type" value="Genomic_DNA"/>
</dbReference>
<dbReference type="PIR" id="E70016">
    <property type="entry name" value="E70016"/>
</dbReference>
<dbReference type="RefSeq" id="NP_391123.1">
    <property type="nucleotide sequence ID" value="NC_000964.3"/>
</dbReference>
<dbReference type="RefSeq" id="WP_003243942.1">
    <property type="nucleotide sequence ID" value="NZ_OZ025638.1"/>
</dbReference>
<dbReference type="SMR" id="O32139"/>
<dbReference type="FunCoup" id="O32139">
    <property type="interactions" value="210"/>
</dbReference>
<dbReference type="STRING" id="224308.BSU32430"/>
<dbReference type="TCDB" id="2.A.40.3.2">
    <property type="family name" value="the nucleobase/ascorbate transporter (nat) or nucleobase:cation symporter-2 (ncs2) family"/>
</dbReference>
<dbReference type="jPOST" id="O32139"/>
<dbReference type="PaxDb" id="224308-BSU32430"/>
<dbReference type="DNASU" id="937096"/>
<dbReference type="EnsemblBacteria" id="CAB15233">
    <property type="protein sequence ID" value="CAB15233"/>
    <property type="gene ID" value="BSU_32430"/>
</dbReference>
<dbReference type="GeneID" id="937096"/>
<dbReference type="KEGG" id="bsu:BSU32430"/>
<dbReference type="PATRIC" id="fig|224308.179.peg.3510"/>
<dbReference type="eggNOG" id="COG2233">
    <property type="taxonomic scope" value="Bacteria"/>
</dbReference>
<dbReference type="InParanoid" id="O32139"/>
<dbReference type="OrthoDB" id="9805749at2"/>
<dbReference type="PhylomeDB" id="O32139"/>
<dbReference type="BioCyc" id="BSUB:BSU32430-MONOMER"/>
<dbReference type="Proteomes" id="UP000001570">
    <property type="component" value="Chromosome"/>
</dbReference>
<dbReference type="GO" id="GO:0005886">
    <property type="term" value="C:plasma membrane"/>
    <property type="evidence" value="ECO:0000318"/>
    <property type="project" value="GO_Central"/>
</dbReference>
<dbReference type="GO" id="GO:0042907">
    <property type="term" value="F:xanthine transmembrane transporter activity"/>
    <property type="evidence" value="ECO:0000318"/>
    <property type="project" value="GO_Central"/>
</dbReference>
<dbReference type="GO" id="GO:0042906">
    <property type="term" value="P:xanthine transport"/>
    <property type="evidence" value="ECO:0000318"/>
    <property type="project" value="GO_Central"/>
</dbReference>
<dbReference type="InterPro" id="IPR006043">
    <property type="entry name" value="NCS2"/>
</dbReference>
<dbReference type="InterPro" id="IPR017588">
    <property type="entry name" value="UacT-like"/>
</dbReference>
<dbReference type="InterPro" id="IPR006042">
    <property type="entry name" value="Xan_ur_permease"/>
</dbReference>
<dbReference type="NCBIfam" id="TIGR00801">
    <property type="entry name" value="ncs2"/>
    <property type="match status" value="1"/>
</dbReference>
<dbReference type="NCBIfam" id="NF037981">
    <property type="entry name" value="NCS2_1"/>
    <property type="match status" value="1"/>
</dbReference>
<dbReference type="NCBIfam" id="TIGR03173">
    <property type="entry name" value="pbuX"/>
    <property type="match status" value="1"/>
</dbReference>
<dbReference type="PANTHER" id="PTHR42810">
    <property type="entry name" value="PURINE PERMEASE C1399.01C-RELATED"/>
    <property type="match status" value="1"/>
</dbReference>
<dbReference type="PANTHER" id="PTHR42810:SF4">
    <property type="entry name" value="URIC ACID TRANSPORTER UACT"/>
    <property type="match status" value="1"/>
</dbReference>
<dbReference type="Pfam" id="PF00860">
    <property type="entry name" value="Xan_ur_permease"/>
    <property type="match status" value="1"/>
</dbReference>
<dbReference type="PROSITE" id="PS01116">
    <property type="entry name" value="XANTH_URACIL_PERMASE"/>
    <property type="match status" value="1"/>
</dbReference>
<comment type="function">
    <text evidence="2">Uptake of uric acid.</text>
</comment>
<comment type="subcellular location">
    <subcellularLocation>
        <location evidence="4">Cell membrane</location>
        <topology evidence="4">Multi-pass membrane protein</topology>
    </subcellularLocation>
</comment>
<comment type="induction">
    <text evidence="2 3">Expression is very low in excess nitrogen (glutamate plus ammonia) and is induced by TnrA during limiting-nitrogen conditions (glutamate). Expression is further induced when allantoin or uric acid are added during limiting-nitrogen conditions.</text>
</comment>
<comment type="similarity">
    <text evidence="4">Belongs to the nucleobase:cation symporter-2 (NCS2) (TC 2.A.40) family.</text>
</comment>
<organism>
    <name type="scientific">Bacillus subtilis (strain 168)</name>
    <dbReference type="NCBI Taxonomy" id="224308"/>
    <lineage>
        <taxon>Bacteria</taxon>
        <taxon>Bacillati</taxon>
        <taxon>Bacillota</taxon>
        <taxon>Bacilli</taxon>
        <taxon>Bacillales</taxon>
        <taxon>Bacillaceae</taxon>
        <taxon>Bacillus</taxon>
    </lineage>
</organism>
<protein>
    <recommendedName>
        <fullName>Uric acid permease PucJ</fullName>
    </recommendedName>
</protein>
<feature type="chain" id="PRO_0000165954" description="Uric acid permease PucJ">
    <location>
        <begin position="1"/>
        <end position="449"/>
    </location>
</feature>
<feature type="transmembrane region" description="Helical" evidence="1">
    <location>
        <begin position="11"/>
        <end position="31"/>
    </location>
</feature>
<feature type="transmembrane region" description="Helical" evidence="1">
    <location>
        <begin position="41"/>
        <end position="61"/>
    </location>
</feature>
<feature type="transmembrane region" description="Helical" evidence="1">
    <location>
        <begin position="67"/>
        <end position="87"/>
    </location>
</feature>
<feature type="transmembrane region" description="Helical" evidence="1">
    <location>
        <begin position="91"/>
        <end position="111"/>
    </location>
</feature>
<feature type="transmembrane region" description="Helical" evidence="1">
    <location>
        <begin position="119"/>
        <end position="139"/>
    </location>
</feature>
<feature type="transmembrane region" description="Helical" evidence="1">
    <location>
        <begin position="158"/>
        <end position="178"/>
    </location>
</feature>
<feature type="transmembrane region" description="Helical" evidence="1">
    <location>
        <begin position="191"/>
        <end position="211"/>
    </location>
</feature>
<feature type="transmembrane region" description="Helical" evidence="1">
    <location>
        <begin position="229"/>
        <end position="249"/>
    </location>
</feature>
<feature type="transmembrane region" description="Helical" evidence="1">
    <location>
        <begin position="277"/>
        <end position="297"/>
    </location>
</feature>
<feature type="transmembrane region" description="Helical" evidence="1">
    <location>
        <begin position="313"/>
        <end position="333"/>
    </location>
</feature>
<feature type="transmembrane region" description="Helical" evidence="1">
    <location>
        <begin position="334"/>
        <end position="354"/>
    </location>
</feature>
<feature type="transmembrane region" description="Helical" evidence="1">
    <location>
        <begin position="372"/>
        <end position="392"/>
    </location>
</feature>
<feature type="transmembrane region" description="Helical" evidence="1">
    <location>
        <begin position="401"/>
        <end position="421"/>
    </location>
</feature>
<accession>O32139</accession>
<name>PUCJ_BACSU</name>
<reference key="1">
    <citation type="journal article" date="1997" name="Nature">
        <title>The complete genome sequence of the Gram-positive bacterium Bacillus subtilis.</title>
        <authorList>
            <person name="Kunst F."/>
            <person name="Ogasawara N."/>
            <person name="Moszer I."/>
            <person name="Albertini A.M."/>
            <person name="Alloni G."/>
            <person name="Azevedo V."/>
            <person name="Bertero M.G."/>
            <person name="Bessieres P."/>
            <person name="Bolotin A."/>
            <person name="Borchert S."/>
            <person name="Borriss R."/>
            <person name="Boursier L."/>
            <person name="Brans A."/>
            <person name="Braun M."/>
            <person name="Brignell S.C."/>
            <person name="Bron S."/>
            <person name="Brouillet S."/>
            <person name="Bruschi C.V."/>
            <person name="Caldwell B."/>
            <person name="Capuano V."/>
            <person name="Carter N.M."/>
            <person name="Choi S.-K."/>
            <person name="Codani J.-J."/>
            <person name="Connerton I.F."/>
            <person name="Cummings N.J."/>
            <person name="Daniel R.A."/>
            <person name="Denizot F."/>
            <person name="Devine K.M."/>
            <person name="Duesterhoeft A."/>
            <person name="Ehrlich S.D."/>
            <person name="Emmerson P.T."/>
            <person name="Entian K.-D."/>
            <person name="Errington J."/>
            <person name="Fabret C."/>
            <person name="Ferrari E."/>
            <person name="Foulger D."/>
            <person name="Fritz C."/>
            <person name="Fujita M."/>
            <person name="Fujita Y."/>
            <person name="Fuma S."/>
            <person name="Galizzi A."/>
            <person name="Galleron N."/>
            <person name="Ghim S.-Y."/>
            <person name="Glaser P."/>
            <person name="Goffeau A."/>
            <person name="Golightly E.J."/>
            <person name="Grandi G."/>
            <person name="Guiseppi G."/>
            <person name="Guy B.J."/>
            <person name="Haga K."/>
            <person name="Haiech J."/>
            <person name="Harwood C.R."/>
            <person name="Henaut A."/>
            <person name="Hilbert H."/>
            <person name="Holsappel S."/>
            <person name="Hosono S."/>
            <person name="Hullo M.-F."/>
            <person name="Itaya M."/>
            <person name="Jones L.-M."/>
            <person name="Joris B."/>
            <person name="Karamata D."/>
            <person name="Kasahara Y."/>
            <person name="Klaerr-Blanchard M."/>
            <person name="Klein C."/>
            <person name="Kobayashi Y."/>
            <person name="Koetter P."/>
            <person name="Koningstein G."/>
            <person name="Krogh S."/>
            <person name="Kumano M."/>
            <person name="Kurita K."/>
            <person name="Lapidus A."/>
            <person name="Lardinois S."/>
            <person name="Lauber J."/>
            <person name="Lazarevic V."/>
            <person name="Lee S.-M."/>
            <person name="Levine A."/>
            <person name="Liu H."/>
            <person name="Masuda S."/>
            <person name="Mauel C."/>
            <person name="Medigue C."/>
            <person name="Medina N."/>
            <person name="Mellado R.P."/>
            <person name="Mizuno M."/>
            <person name="Moestl D."/>
            <person name="Nakai S."/>
            <person name="Noback M."/>
            <person name="Noone D."/>
            <person name="O'Reilly M."/>
            <person name="Ogawa K."/>
            <person name="Ogiwara A."/>
            <person name="Oudega B."/>
            <person name="Park S.-H."/>
            <person name="Parro V."/>
            <person name="Pohl T.M."/>
            <person name="Portetelle D."/>
            <person name="Porwollik S."/>
            <person name="Prescott A.M."/>
            <person name="Presecan E."/>
            <person name="Pujic P."/>
            <person name="Purnelle B."/>
            <person name="Rapoport G."/>
            <person name="Rey M."/>
            <person name="Reynolds S."/>
            <person name="Rieger M."/>
            <person name="Rivolta C."/>
            <person name="Rocha E."/>
            <person name="Roche B."/>
            <person name="Rose M."/>
            <person name="Sadaie Y."/>
            <person name="Sato T."/>
            <person name="Scanlan E."/>
            <person name="Schleich S."/>
            <person name="Schroeter R."/>
            <person name="Scoffone F."/>
            <person name="Sekiguchi J."/>
            <person name="Sekowska A."/>
            <person name="Seror S.J."/>
            <person name="Serror P."/>
            <person name="Shin B.-S."/>
            <person name="Soldo B."/>
            <person name="Sorokin A."/>
            <person name="Tacconi E."/>
            <person name="Takagi T."/>
            <person name="Takahashi H."/>
            <person name="Takemaru K."/>
            <person name="Takeuchi M."/>
            <person name="Tamakoshi A."/>
            <person name="Tanaka T."/>
            <person name="Terpstra P."/>
            <person name="Tognoni A."/>
            <person name="Tosato V."/>
            <person name="Uchiyama S."/>
            <person name="Vandenbol M."/>
            <person name="Vannier F."/>
            <person name="Vassarotti A."/>
            <person name="Viari A."/>
            <person name="Wambutt R."/>
            <person name="Wedler E."/>
            <person name="Wedler H."/>
            <person name="Weitzenegger T."/>
            <person name="Winters P."/>
            <person name="Wipat A."/>
            <person name="Yamamoto H."/>
            <person name="Yamane K."/>
            <person name="Yasumoto K."/>
            <person name="Yata K."/>
            <person name="Yoshida K."/>
            <person name="Yoshikawa H.-F."/>
            <person name="Zumstein E."/>
            <person name="Yoshikawa H."/>
            <person name="Danchin A."/>
        </authorList>
    </citation>
    <scope>NUCLEOTIDE SEQUENCE [LARGE SCALE GENOMIC DNA]</scope>
    <source>
        <strain>168</strain>
    </source>
</reference>
<reference key="2">
    <citation type="journal article" date="2001" name="J. Bacteriol.">
        <title>Functional analysis of 14 genes that constitute the purine catabolic pathway in Bacillus subtilis and evidence for a novel regulon controlled by the PucR transcription activator.</title>
        <authorList>
            <person name="Schultz A.C."/>
            <person name="Nygaard P."/>
            <person name="Saxild H.H."/>
        </authorList>
    </citation>
    <scope>FUNCTION</scope>
    <scope>INDUCTION</scope>
    <source>
        <strain>168</strain>
    </source>
</reference>
<reference key="3">
    <citation type="journal article" date="2003" name="Mol. Microbiol.">
        <title>Identification of additional TnrA-regulated genes of Bacillus subtilis associated with a TnrA box.</title>
        <authorList>
            <person name="Yoshida K."/>
            <person name="Yamaguchi H."/>
            <person name="Kinehara M."/>
            <person name="Ohki Y.-H."/>
            <person name="Nakaura Y."/>
            <person name="Fujita Y."/>
        </authorList>
    </citation>
    <scope>INDUCTION BY TNRA</scope>
</reference>
<keyword id="KW-1003">Cell membrane</keyword>
<keyword id="KW-0472">Membrane</keyword>
<keyword id="KW-1185">Reference proteome</keyword>
<keyword id="KW-0812">Transmembrane</keyword>
<keyword id="KW-1133">Transmembrane helix</keyword>
<keyword id="KW-0813">Transport</keyword>
<evidence type="ECO:0000255" key="1"/>
<evidence type="ECO:0000269" key="2">
    <source>
    </source>
</evidence>
<evidence type="ECO:0000269" key="3">
    <source>
    </source>
</evidence>
<evidence type="ECO:0000305" key="4"/>
<gene>
    <name type="primary">pucJ</name>
    <name type="synonym">yunJ</name>
    <name type="ordered locus">BSU32430</name>
</gene>
<proteinExistence type="evidence at transcript level"/>
<sequence>MKKRSFKVFTLSLQHVLAMYAGAILVPLLVGRALNVTTEQLSYLLAIDLLTCGVATLLQTLRGTYIGIGLPVMLGSSFVAVTPMIAIGSNYGIHAIYGSIIAAGVFIFLFARFFGKLTVLFPPVVTGTVVTLIGLSLVPTGVKNMAGGEKINGSANPEYGSLENLLLSVGVLVLILVLNRFLKGFARTLSVLIGIAAGTAAAAIMGKVSFSSVTEAPFFQIPKPFYFGAPAFEIGPILTMLIVGIVIIVESTGVFYAIGKICGRPLTDKDLVKGYRAEGIAILIGGLFNAFPYNTFAQNAGLLQLTKVKTRNIVVTAGCILVCLGLIPKIAALASAVPAAVLGGATVVMFGMVIASGVKMLSTADLKNQYHLLTIACSIALGIGASTAPGIFAEFPAPIRILVSDGTITGSLTAIFLNLFFSLRDKKELTAQQTELPVLEHTLALEKEV</sequence>